<accession>Q4ZL26</accession>
<reference key="1">
    <citation type="journal article" date="2005" name="Proc. Natl. Acad. Sci. U.S.A.">
        <title>Comparison of the complete genome sequences of Pseudomonas syringae pv. syringae B728a and pv. tomato DC3000.</title>
        <authorList>
            <person name="Feil H."/>
            <person name="Feil W.S."/>
            <person name="Chain P."/>
            <person name="Larimer F."/>
            <person name="Dibartolo G."/>
            <person name="Copeland A."/>
            <person name="Lykidis A."/>
            <person name="Trong S."/>
            <person name="Nolan M."/>
            <person name="Goltsman E."/>
            <person name="Thiel J."/>
            <person name="Malfatti S."/>
            <person name="Loper J.E."/>
            <person name="Lapidus A."/>
            <person name="Detter J.C."/>
            <person name="Land M."/>
            <person name="Richardson P.M."/>
            <person name="Kyrpides N.C."/>
            <person name="Ivanova N."/>
            <person name="Lindow S.E."/>
        </authorList>
    </citation>
    <scope>NUCLEOTIDE SEQUENCE [LARGE SCALE GENOMIC DNA]</scope>
    <source>
        <strain>B728a</strain>
    </source>
</reference>
<feature type="chain" id="PRO_0000233826" description="Bifunctional protein GlmU">
    <location>
        <begin position="1"/>
        <end position="455"/>
    </location>
</feature>
<feature type="region of interest" description="Pyrophosphorylase" evidence="1">
    <location>
        <begin position="1"/>
        <end position="226"/>
    </location>
</feature>
<feature type="region of interest" description="Linker" evidence="1">
    <location>
        <begin position="227"/>
        <end position="247"/>
    </location>
</feature>
<feature type="region of interest" description="N-acetyltransferase" evidence="1">
    <location>
        <begin position="248"/>
        <end position="455"/>
    </location>
</feature>
<feature type="active site" description="Proton acceptor" evidence="1">
    <location>
        <position position="360"/>
    </location>
</feature>
<feature type="binding site" evidence="1">
    <location>
        <begin position="8"/>
        <end position="11"/>
    </location>
    <ligand>
        <name>UDP-N-acetyl-alpha-D-glucosamine</name>
        <dbReference type="ChEBI" id="CHEBI:57705"/>
    </ligand>
</feature>
<feature type="binding site" evidence="1">
    <location>
        <position position="22"/>
    </location>
    <ligand>
        <name>UDP-N-acetyl-alpha-D-glucosamine</name>
        <dbReference type="ChEBI" id="CHEBI:57705"/>
    </ligand>
</feature>
<feature type="binding site" evidence="1">
    <location>
        <position position="73"/>
    </location>
    <ligand>
        <name>UDP-N-acetyl-alpha-D-glucosamine</name>
        <dbReference type="ChEBI" id="CHEBI:57705"/>
    </ligand>
</feature>
<feature type="binding site" evidence="1">
    <location>
        <begin position="78"/>
        <end position="79"/>
    </location>
    <ligand>
        <name>UDP-N-acetyl-alpha-D-glucosamine</name>
        <dbReference type="ChEBI" id="CHEBI:57705"/>
    </ligand>
</feature>
<feature type="binding site" evidence="1">
    <location>
        <begin position="99"/>
        <end position="101"/>
    </location>
    <ligand>
        <name>UDP-N-acetyl-alpha-D-glucosamine</name>
        <dbReference type="ChEBI" id="CHEBI:57705"/>
    </ligand>
</feature>
<feature type="binding site" evidence="1">
    <location>
        <position position="101"/>
    </location>
    <ligand>
        <name>Mg(2+)</name>
        <dbReference type="ChEBI" id="CHEBI:18420"/>
    </ligand>
</feature>
<feature type="binding site" evidence="1">
    <location>
        <position position="136"/>
    </location>
    <ligand>
        <name>UDP-N-acetyl-alpha-D-glucosamine</name>
        <dbReference type="ChEBI" id="CHEBI:57705"/>
    </ligand>
</feature>
<feature type="binding site" evidence="1">
    <location>
        <position position="151"/>
    </location>
    <ligand>
        <name>UDP-N-acetyl-alpha-D-glucosamine</name>
        <dbReference type="ChEBI" id="CHEBI:57705"/>
    </ligand>
</feature>
<feature type="binding site" evidence="1">
    <location>
        <position position="166"/>
    </location>
    <ligand>
        <name>UDP-N-acetyl-alpha-D-glucosamine</name>
        <dbReference type="ChEBI" id="CHEBI:57705"/>
    </ligand>
</feature>
<feature type="binding site" evidence="1">
    <location>
        <position position="224"/>
    </location>
    <ligand>
        <name>Mg(2+)</name>
        <dbReference type="ChEBI" id="CHEBI:18420"/>
    </ligand>
</feature>
<feature type="binding site" evidence="1">
    <location>
        <position position="224"/>
    </location>
    <ligand>
        <name>UDP-N-acetyl-alpha-D-glucosamine</name>
        <dbReference type="ChEBI" id="CHEBI:57705"/>
    </ligand>
</feature>
<feature type="binding site" evidence="1">
    <location>
        <position position="330"/>
    </location>
    <ligand>
        <name>UDP-N-acetyl-alpha-D-glucosamine</name>
        <dbReference type="ChEBI" id="CHEBI:57705"/>
    </ligand>
</feature>
<feature type="binding site" evidence="1">
    <location>
        <position position="348"/>
    </location>
    <ligand>
        <name>UDP-N-acetyl-alpha-D-glucosamine</name>
        <dbReference type="ChEBI" id="CHEBI:57705"/>
    </ligand>
</feature>
<feature type="binding site" evidence="1">
    <location>
        <position position="363"/>
    </location>
    <ligand>
        <name>UDP-N-acetyl-alpha-D-glucosamine</name>
        <dbReference type="ChEBI" id="CHEBI:57705"/>
    </ligand>
</feature>
<feature type="binding site" evidence="1">
    <location>
        <position position="374"/>
    </location>
    <ligand>
        <name>UDP-N-acetyl-alpha-D-glucosamine</name>
        <dbReference type="ChEBI" id="CHEBI:57705"/>
    </ligand>
</feature>
<feature type="binding site" evidence="1">
    <location>
        <position position="377"/>
    </location>
    <ligand>
        <name>acetyl-CoA</name>
        <dbReference type="ChEBI" id="CHEBI:57288"/>
    </ligand>
</feature>
<feature type="binding site" evidence="1">
    <location>
        <begin position="383"/>
        <end position="384"/>
    </location>
    <ligand>
        <name>acetyl-CoA</name>
        <dbReference type="ChEBI" id="CHEBI:57288"/>
    </ligand>
</feature>
<feature type="binding site" evidence="1">
    <location>
        <position position="402"/>
    </location>
    <ligand>
        <name>acetyl-CoA</name>
        <dbReference type="ChEBI" id="CHEBI:57288"/>
    </ligand>
</feature>
<feature type="binding site" evidence="1">
    <location>
        <position position="420"/>
    </location>
    <ligand>
        <name>acetyl-CoA</name>
        <dbReference type="ChEBI" id="CHEBI:57288"/>
    </ligand>
</feature>
<feature type="binding site" evidence="1">
    <location>
        <position position="437"/>
    </location>
    <ligand>
        <name>acetyl-CoA</name>
        <dbReference type="ChEBI" id="CHEBI:57288"/>
    </ligand>
</feature>
<evidence type="ECO:0000255" key="1">
    <source>
        <dbReference type="HAMAP-Rule" id="MF_01631"/>
    </source>
</evidence>
<gene>
    <name evidence="1" type="primary">glmU</name>
    <name type="ordered locus">Psyr_5119</name>
</gene>
<comment type="function">
    <text evidence="1">Catalyzes the last two sequential reactions in the de novo biosynthetic pathway for UDP-N-acetylglucosamine (UDP-GlcNAc). The C-terminal domain catalyzes the transfer of acetyl group from acetyl coenzyme A to glucosamine-1-phosphate (GlcN-1-P) to produce N-acetylglucosamine-1-phosphate (GlcNAc-1-P), which is converted into UDP-GlcNAc by the transfer of uridine 5-monophosphate (from uridine 5-triphosphate), a reaction catalyzed by the N-terminal domain.</text>
</comment>
<comment type="catalytic activity">
    <reaction evidence="1">
        <text>alpha-D-glucosamine 1-phosphate + acetyl-CoA = N-acetyl-alpha-D-glucosamine 1-phosphate + CoA + H(+)</text>
        <dbReference type="Rhea" id="RHEA:13725"/>
        <dbReference type="ChEBI" id="CHEBI:15378"/>
        <dbReference type="ChEBI" id="CHEBI:57287"/>
        <dbReference type="ChEBI" id="CHEBI:57288"/>
        <dbReference type="ChEBI" id="CHEBI:57776"/>
        <dbReference type="ChEBI" id="CHEBI:58516"/>
        <dbReference type="EC" id="2.3.1.157"/>
    </reaction>
</comment>
<comment type="catalytic activity">
    <reaction evidence="1">
        <text>N-acetyl-alpha-D-glucosamine 1-phosphate + UTP + H(+) = UDP-N-acetyl-alpha-D-glucosamine + diphosphate</text>
        <dbReference type="Rhea" id="RHEA:13509"/>
        <dbReference type="ChEBI" id="CHEBI:15378"/>
        <dbReference type="ChEBI" id="CHEBI:33019"/>
        <dbReference type="ChEBI" id="CHEBI:46398"/>
        <dbReference type="ChEBI" id="CHEBI:57705"/>
        <dbReference type="ChEBI" id="CHEBI:57776"/>
        <dbReference type="EC" id="2.7.7.23"/>
    </reaction>
</comment>
<comment type="cofactor">
    <cofactor evidence="1">
        <name>Mg(2+)</name>
        <dbReference type="ChEBI" id="CHEBI:18420"/>
    </cofactor>
    <text evidence="1">Binds 1 Mg(2+) ion per subunit.</text>
</comment>
<comment type="pathway">
    <text evidence="1">Nucleotide-sugar biosynthesis; UDP-N-acetyl-alpha-D-glucosamine biosynthesis; N-acetyl-alpha-D-glucosamine 1-phosphate from alpha-D-glucosamine 6-phosphate (route II): step 2/2.</text>
</comment>
<comment type="pathway">
    <text evidence="1">Nucleotide-sugar biosynthesis; UDP-N-acetyl-alpha-D-glucosamine biosynthesis; UDP-N-acetyl-alpha-D-glucosamine from N-acetyl-alpha-D-glucosamine 1-phosphate: step 1/1.</text>
</comment>
<comment type="pathway">
    <text evidence="1">Bacterial outer membrane biogenesis; LPS lipid A biosynthesis.</text>
</comment>
<comment type="subunit">
    <text evidence="1">Homotrimer.</text>
</comment>
<comment type="subcellular location">
    <subcellularLocation>
        <location evidence="1">Cytoplasm</location>
    </subcellularLocation>
</comment>
<comment type="similarity">
    <text evidence="1">In the N-terminal section; belongs to the N-acetylglucosamine-1-phosphate uridyltransferase family.</text>
</comment>
<comment type="similarity">
    <text evidence="1">In the C-terminal section; belongs to the transferase hexapeptide repeat family.</text>
</comment>
<dbReference type="EC" id="2.7.7.23" evidence="1"/>
<dbReference type="EC" id="2.3.1.157" evidence="1"/>
<dbReference type="EMBL" id="CP000075">
    <property type="protein sequence ID" value="AAY40146.1"/>
    <property type="molecule type" value="Genomic_DNA"/>
</dbReference>
<dbReference type="RefSeq" id="WP_011269444.1">
    <property type="nucleotide sequence ID" value="NC_007005.1"/>
</dbReference>
<dbReference type="RefSeq" id="YP_238184.1">
    <property type="nucleotide sequence ID" value="NC_007005.1"/>
</dbReference>
<dbReference type="SMR" id="Q4ZL26"/>
<dbReference type="STRING" id="205918.Psyr_5119"/>
<dbReference type="KEGG" id="psb:Psyr_5119"/>
<dbReference type="PATRIC" id="fig|205918.7.peg.5280"/>
<dbReference type="eggNOG" id="COG1207">
    <property type="taxonomic scope" value="Bacteria"/>
</dbReference>
<dbReference type="HOGENOM" id="CLU_029499_15_2_6"/>
<dbReference type="OrthoDB" id="9775031at2"/>
<dbReference type="UniPathway" id="UPA00113">
    <property type="reaction ID" value="UER00532"/>
</dbReference>
<dbReference type="UniPathway" id="UPA00113">
    <property type="reaction ID" value="UER00533"/>
</dbReference>
<dbReference type="UniPathway" id="UPA00973"/>
<dbReference type="Proteomes" id="UP000000426">
    <property type="component" value="Chromosome"/>
</dbReference>
<dbReference type="GO" id="GO:0005737">
    <property type="term" value="C:cytoplasm"/>
    <property type="evidence" value="ECO:0007669"/>
    <property type="project" value="UniProtKB-SubCell"/>
</dbReference>
<dbReference type="GO" id="GO:0016020">
    <property type="term" value="C:membrane"/>
    <property type="evidence" value="ECO:0007669"/>
    <property type="project" value="GOC"/>
</dbReference>
<dbReference type="GO" id="GO:0019134">
    <property type="term" value="F:glucosamine-1-phosphate N-acetyltransferase activity"/>
    <property type="evidence" value="ECO:0007669"/>
    <property type="project" value="UniProtKB-UniRule"/>
</dbReference>
<dbReference type="GO" id="GO:0000287">
    <property type="term" value="F:magnesium ion binding"/>
    <property type="evidence" value="ECO:0007669"/>
    <property type="project" value="UniProtKB-UniRule"/>
</dbReference>
<dbReference type="GO" id="GO:0003977">
    <property type="term" value="F:UDP-N-acetylglucosamine diphosphorylase activity"/>
    <property type="evidence" value="ECO:0007669"/>
    <property type="project" value="UniProtKB-UniRule"/>
</dbReference>
<dbReference type="GO" id="GO:0000902">
    <property type="term" value="P:cell morphogenesis"/>
    <property type="evidence" value="ECO:0007669"/>
    <property type="project" value="UniProtKB-UniRule"/>
</dbReference>
<dbReference type="GO" id="GO:0071555">
    <property type="term" value="P:cell wall organization"/>
    <property type="evidence" value="ECO:0007669"/>
    <property type="project" value="UniProtKB-KW"/>
</dbReference>
<dbReference type="GO" id="GO:0009245">
    <property type="term" value="P:lipid A biosynthetic process"/>
    <property type="evidence" value="ECO:0007669"/>
    <property type="project" value="UniProtKB-UniRule"/>
</dbReference>
<dbReference type="GO" id="GO:0009252">
    <property type="term" value="P:peptidoglycan biosynthetic process"/>
    <property type="evidence" value="ECO:0007669"/>
    <property type="project" value="UniProtKB-UniRule"/>
</dbReference>
<dbReference type="GO" id="GO:0008360">
    <property type="term" value="P:regulation of cell shape"/>
    <property type="evidence" value="ECO:0007669"/>
    <property type="project" value="UniProtKB-KW"/>
</dbReference>
<dbReference type="GO" id="GO:0006048">
    <property type="term" value="P:UDP-N-acetylglucosamine biosynthetic process"/>
    <property type="evidence" value="ECO:0007669"/>
    <property type="project" value="UniProtKB-UniPathway"/>
</dbReference>
<dbReference type="CDD" id="cd02540">
    <property type="entry name" value="GT2_GlmU_N_bac"/>
    <property type="match status" value="1"/>
</dbReference>
<dbReference type="CDD" id="cd03353">
    <property type="entry name" value="LbH_GlmU_C"/>
    <property type="match status" value="1"/>
</dbReference>
<dbReference type="Gene3D" id="2.160.10.10">
    <property type="entry name" value="Hexapeptide repeat proteins"/>
    <property type="match status" value="1"/>
</dbReference>
<dbReference type="Gene3D" id="3.90.550.10">
    <property type="entry name" value="Spore Coat Polysaccharide Biosynthesis Protein SpsA, Chain A"/>
    <property type="match status" value="1"/>
</dbReference>
<dbReference type="HAMAP" id="MF_01631">
    <property type="entry name" value="GlmU"/>
    <property type="match status" value="1"/>
</dbReference>
<dbReference type="InterPro" id="IPR005882">
    <property type="entry name" value="Bifunctional_GlmU"/>
</dbReference>
<dbReference type="InterPro" id="IPR050065">
    <property type="entry name" value="GlmU-like"/>
</dbReference>
<dbReference type="InterPro" id="IPR038009">
    <property type="entry name" value="GlmU_C_LbH"/>
</dbReference>
<dbReference type="InterPro" id="IPR001451">
    <property type="entry name" value="Hexapep"/>
</dbReference>
<dbReference type="InterPro" id="IPR025877">
    <property type="entry name" value="MobA-like_NTP_Trfase"/>
</dbReference>
<dbReference type="InterPro" id="IPR029044">
    <property type="entry name" value="Nucleotide-diphossugar_trans"/>
</dbReference>
<dbReference type="InterPro" id="IPR011004">
    <property type="entry name" value="Trimer_LpxA-like_sf"/>
</dbReference>
<dbReference type="NCBIfam" id="TIGR01173">
    <property type="entry name" value="glmU"/>
    <property type="match status" value="1"/>
</dbReference>
<dbReference type="NCBIfam" id="NF010933">
    <property type="entry name" value="PRK14353.1"/>
    <property type="match status" value="1"/>
</dbReference>
<dbReference type="PANTHER" id="PTHR43584:SF3">
    <property type="entry name" value="BIFUNCTIONAL PROTEIN GLMU"/>
    <property type="match status" value="1"/>
</dbReference>
<dbReference type="PANTHER" id="PTHR43584">
    <property type="entry name" value="NUCLEOTIDYL TRANSFERASE"/>
    <property type="match status" value="1"/>
</dbReference>
<dbReference type="Pfam" id="PF00132">
    <property type="entry name" value="Hexapep"/>
    <property type="match status" value="1"/>
</dbReference>
<dbReference type="Pfam" id="PF12804">
    <property type="entry name" value="NTP_transf_3"/>
    <property type="match status" value="1"/>
</dbReference>
<dbReference type="SUPFAM" id="SSF53448">
    <property type="entry name" value="Nucleotide-diphospho-sugar transferases"/>
    <property type="match status" value="1"/>
</dbReference>
<dbReference type="SUPFAM" id="SSF51161">
    <property type="entry name" value="Trimeric LpxA-like enzymes"/>
    <property type="match status" value="1"/>
</dbReference>
<organism>
    <name type="scientific">Pseudomonas syringae pv. syringae (strain B728a)</name>
    <dbReference type="NCBI Taxonomy" id="205918"/>
    <lineage>
        <taxon>Bacteria</taxon>
        <taxon>Pseudomonadati</taxon>
        <taxon>Pseudomonadota</taxon>
        <taxon>Gammaproteobacteria</taxon>
        <taxon>Pseudomonadales</taxon>
        <taxon>Pseudomonadaceae</taxon>
        <taxon>Pseudomonas</taxon>
        <taxon>Pseudomonas syringae</taxon>
    </lineage>
</organism>
<keyword id="KW-0012">Acyltransferase</keyword>
<keyword id="KW-0133">Cell shape</keyword>
<keyword id="KW-0961">Cell wall biogenesis/degradation</keyword>
<keyword id="KW-0963">Cytoplasm</keyword>
<keyword id="KW-0460">Magnesium</keyword>
<keyword id="KW-0479">Metal-binding</keyword>
<keyword id="KW-0511">Multifunctional enzyme</keyword>
<keyword id="KW-0548">Nucleotidyltransferase</keyword>
<keyword id="KW-0573">Peptidoglycan synthesis</keyword>
<keyword id="KW-0677">Repeat</keyword>
<keyword id="KW-0808">Transferase</keyword>
<name>GLMU_PSEU2</name>
<protein>
    <recommendedName>
        <fullName evidence="1">Bifunctional protein GlmU</fullName>
    </recommendedName>
    <domain>
        <recommendedName>
            <fullName evidence="1">UDP-N-acetylglucosamine pyrophosphorylase</fullName>
            <ecNumber evidence="1">2.7.7.23</ecNumber>
        </recommendedName>
        <alternativeName>
            <fullName evidence="1">N-acetylglucosamine-1-phosphate uridyltransferase</fullName>
        </alternativeName>
    </domain>
    <domain>
        <recommendedName>
            <fullName evidence="1">Glucosamine-1-phosphate N-acetyltransferase</fullName>
            <ecNumber evidence="1">2.3.1.157</ecNumber>
        </recommendedName>
    </domain>
</protein>
<sequence length="455" mass="48257">MSLDIVILAAGQGTRMRSALPKVLHPVAGNSMLGHVIHSARQLSPSGIHVVIGHGADAVREQLSADDLNFVMQDKQLGTGHAVAQALPALTADTVLILYGDVPLIEVETLSRLLERVNPQQLGLLTVALDDPTGYGRIVRDDQNRVCAIVEHKDASDAQKAITEGNTGILAVPAAHLADWLGRLSNNNAQGEYYLTDVIAMAANDGLVVATEQPHDAMEVQGANDRKQLSELERHYQMREARRLMAAGVTLRDPARFDVRGEVIVGRDVLIDINVILEGKVVIEDDVVIGPNCVIKDSTLRKGVVVKANSHIEGAILGEGSDAGPFARLRPGSVLGAKAHVGNFVELKNANLGEGAKVGHLTYLGDAEIGARTNIGAGTITCNYDGANKHKTTLGADVFIGSNNSLVAPVDILDGATTAAGSTITQNVPAEQLGVARARQRNIEGWKRPVKISKD</sequence>
<proteinExistence type="inferred from homology"/>